<feature type="chain" id="PRO_0000389736" description="Acetyl-coenzyme A carboxylase carboxyl transferase subunit beta">
    <location>
        <begin position="1"/>
        <end position="288"/>
    </location>
</feature>
<feature type="domain" description="CoA carboxyltransferase N-terminal" evidence="2">
    <location>
        <begin position="32"/>
        <end position="288"/>
    </location>
</feature>
<feature type="zinc finger region" description="C4-type" evidence="1">
    <location>
        <begin position="36"/>
        <end position="57"/>
    </location>
</feature>
<feature type="binding site" evidence="1">
    <location>
        <position position="36"/>
    </location>
    <ligand>
        <name>Zn(2+)</name>
        <dbReference type="ChEBI" id="CHEBI:29105"/>
    </ligand>
</feature>
<feature type="binding site" evidence="1">
    <location>
        <position position="39"/>
    </location>
    <ligand>
        <name>Zn(2+)</name>
        <dbReference type="ChEBI" id="CHEBI:29105"/>
    </ligand>
</feature>
<feature type="binding site" evidence="1">
    <location>
        <position position="54"/>
    </location>
    <ligand>
        <name>Zn(2+)</name>
        <dbReference type="ChEBI" id="CHEBI:29105"/>
    </ligand>
</feature>
<feature type="binding site" evidence="1">
    <location>
        <position position="57"/>
    </location>
    <ligand>
        <name>Zn(2+)</name>
        <dbReference type="ChEBI" id="CHEBI:29105"/>
    </ligand>
</feature>
<protein>
    <recommendedName>
        <fullName evidence="1">Acetyl-coenzyme A carboxylase carboxyl transferase subunit beta</fullName>
        <shortName evidence="1">ACCase subunit beta</shortName>
        <shortName evidence="1">Acetyl-CoA carboxylase carboxyltransferase subunit beta</shortName>
        <ecNumber evidence="1">2.1.3.15</ecNumber>
    </recommendedName>
</protein>
<organism>
    <name type="scientific">Enterococcus faecalis (strain ATCC 700802 / V583)</name>
    <dbReference type="NCBI Taxonomy" id="226185"/>
    <lineage>
        <taxon>Bacteria</taxon>
        <taxon>Bacillati</taxon>
        <taxon>Bacillota</taxon>
        <taxon>Bacilli</taxon>
        <taxon>Lactobacillales</taxon>
        <taxon>Enterococcaceae</taxon>
        <taxon>Enterococcus</taxon>
    </lineage>
</organism>
<keyword id="KW-0067">ATP-binding</keyword>
<keyword id="KW-0963">Cytoplasm</keyword>
<keyword id="KW-0275">Fatty acid biosynthesis</keyword>
<keyword id="KW-0276">Fatty acid metabolism</keyword>
<keyword id="KW-0444">Lipid biosynthesis</keyword>
<keyword id="KW-0443">Lipid metabolism</keyword>
<keyword id="KW-0479">Metal-binding</keyword>
<keyword id="KW-0547">Nucleotide-binding</keyword>
<keyword id="KW-1185">Reference proteome</keyword>
<keyword id="KW-0808">Transferase</keyword>
<keyword id="KW-0862">Zinc</keyword>
<keyword id="KW-0863">Zinc-finger</keyword>
<gene>
    <name evidence="1" type="primary">accD</name>
    <name type="ordered locus">EF_2876</name>
</gene>
<sequence length="288" mass="32240">MALFKKKNYIRINPNRAHANDASKKPSVPDNMWAKCPSCKRTLYTKEMGAEKICPHCGYSFRIGAWERLAITVDEKSFHNWDSELVTKDPLNFPGYLEKIEKMQEKTGLDEAVLTGEATIEGQAVAIGIMDANFIMGSMGTIVGEKITRLFERATEKHLPVVIFTASGGARMQEGIFSLMQMAKISAALQRHNKAGLLYLTVLTDPTTGGVTASFAMDGDIILAEPQSLIGFAGRRVIEQTIRQELPDDFQKAEFLLEHGFVDQIVPRNLLRQRLSDLLRLHSLEGWR</sequence>
<reference key="1">
    <citation type="journal article" date="2003" name="Science">
        <title>Role of mobile DNA in the evolution of vancomycin-resistant Enterococcus faecalis.</title>
        <authorList>
            <person name="Paulsen I.T."/>
            <person name="Banerjei L."/>
            <person name="Myers G.S.A."/>
            <person name="Nelson K.E."/>
            <person name="Seshadri R."/>
            <person name="Read T.D."/>
            <person name="Fouts D.E."/>
            <person name="Eisen J.A."/>
            <person name="Gill S.R."/>
            <person name="Heidelberg J.F."/>
            <person name="Tettelin H."/>
            <person name="Dodson R.J."/>
            <person name="Umayam L.A."/>
            <person name="Brinkac L.M."/>
            <person name="Beanan M.J."/>
            <person name="Daugherty S.C."/>
            <person name="DeBoy R.T."/>
            <person name="Durkin S.A."/>
            <person name="Kolonay J.F."/>
            <person name="Madupu R."/>
            <person name="Nelson W.C."/>
            <person name="Vamathevan J.J."/>
            <person name="Tran B."/>
            <person name="Upton J."/>
            <person name="Hansen T."/>
            <person name="Shetty J."/>
            <person name="Khouri H.M."/>
            <person name="Utterback T.R."/>
            <person name="Radune D."/>
            <person name="Ketchum K.A."/>
            <person name="Dougherty B.A."/>
            <person name="Fraser C.M."/>
        </authorList>
    </citation>
    <scope>NUCLEOTIDE SEQUENCE [LARGE SCALE GENOMIC DNA]</scope>
    <source>
        <strain>ATCC 700802 / V583</strain>
    </source>
</reference>
<comment type="function">
    <text evidence="1">Component of the acetyl coenzyme A carboxylase (ACC) complex. Biotin carboxylase (BC) catalyzes the carboxylation of biotin on its carrier protein (BCCP) and then the CO(2) group is transferred by the transcarboxylase to acetyl-CoA to form malonyl-CoA.</text>
</comment>
<comment type="catalytic activity">
    <reaction evidence="1">
        <text>N(6)-carboxybiotinyl-L-lysyl-[protein] + acetyl-CoA = N(6)-biotinyl-L-lysyl-[protein] + malonyl-CoA</text>
        <dbReference type="Rhea" id="RHEA:54728"/>
        <dbReference type="Rhea" id="RHEA-COMP:10505"/>
        <dbReference type="Rhea" id="RHEA-COMP:10506"/>
        <dbReference type="ChEBI" id="CHEBI:57288"/>
        <dbReference type="ChEBI" id="CHEBI:57384"/>
        <dbReference type="ChEBI" id="CHEBI:83144"/>
        <dbReference type="ChEBI" id="CHEBI:83145"/>
        <dbReference type="EC" id="2.1.3.15"/>
    </reaction>
</comment>
<comment type="cofactor">
    <cofactor evidence="1">
        <name>Zn(2+)</name>
        <dbReference type="ChEBI" id="CHEBI:29105"/>
    </cofactor>
    <text evidence="1">Binds 1 zinc ion per subunit.</text>
</comment>
<comment type="pathway">
    <text evidence="1">Lipid metabolism; malonyl-CoA biosynthesis; malonyl-CoA from acetyl-CoA: step 1/1.</text>
</comment>
<comment type="subunit">
    <text evidence="1">Acetyl-CoA carboxylase is a heterohexamer composed of biotin carboxyl carrier protein (AccB), biotin carboxylase (AccC) and two subunits each of ACCase subunit alpha (AccA) and ACCase subunit beta (AccD).</text>
</comment>
<comment type="subcellular location">
    <subcellularLocation>
        <location evidence="1">Cytoplasm</location>
    </subcellularLocation>
</comment>
<comment type="similarity">
    <text evidence="1">Belongs to the AccD/PCCB family.</text>
</comment>
<dbReference type="EC" id="2.1.3.15" evidence="1"/>
<dbReference type="EMBL" id="AE016830">
    <property type="protein sequence ID" value="AAO82566.1"/>
    <property type="molecule type" value="Genomic_DNA"/>
</dbReference>
<dbReference type="RefSeq" id="NP_816496.1">
    <property type="nucleotide sequence ID" value="NC_004668.1"/>
</dbReference>
<dbReference type="RefSeq" id="WP_010773830.1">
    <property type="nucleotide sequence ID" value="NZ_KE136528.1"/>
</dbReference>
<dbReference type="SMR" id="Q830B4"/>
<dbReference type="STRING" id="226185.EF_2876"/>
<dbReference type="EnsemblBacteria" id="AAO82566">
    <property type="protein sequence ID" value="AAO82566"/>
    <property type="gene ID" value="EF_2876"/>
</dbReference>
<dbReference type="KEGG" id="efa:EF2876"/>
<dbReference type="PATRIC" id="fig|226185.45.peg.697"/>
<dbReference type="eggNOG" id="COG0777">
    <property type="taxonomic scope" value="Bacteria"/>
</dbReference>
<dbReference type="HOGENOM" id="CLU_015486_1_1_9"/>
<dbReference type="UniPathway" id="UPA00655">
    <property type="reaction ID" value="UER00711"/>
</dbReference>
<dbReference type="Proteomes" id="UP000001415">
    <property type="component" value="Chromosome"/>
</dbReference>
<dbReference type="GO" id="GO:0009317">
    <property type="term" value="C:acetyl-CoA carboxylase complex"/>
    <property type="evidence" value="ECO:0007669"/>
    <property type="project" value="InterPro"/>
</dbReference>
<dbReference type="GO" id="GO:0003989">
    <property type="term" value="F:acetyl-CoA carboxylase activity"/>
    <property type="evidence" value="ECO:0007669"/>
    <property type="project" value="InterPro"/>
</dbReference>
<dbReference type="GO" id="GO:0005524">
    <property type="term" value="F:ATP binding"/>
    <property type="evidence" value="ECO:0007669"/>
    <property type="project" value="UniProtKB-KW"/>
</dbReference>
<dbReference type="GO" id="GO:0016743">
    <property type="term" value="F:carboxyl- or carbamoyltransferase activity"/>
    <property type="evidence" value="ECO:0007669"/>
    <property type="project" value="UniProtKB-UniRule"/>
</dbReference>
<dbReference type="GO" id="GO:0008270">
    <property type="term" value="F:zinc ion binding"/>
    <property type="evidence" value="ECO:0007669"/>
    <property type="project" value="UniProtKB-UniRule"/>
</dbReference>
<dbReference type="GO" id="GO:0006633">
    <property type="term" value="P:fatty acid biosynthetic process"/>
    <property type="evidence" value="ECO:0007669"/>
    <property type="project" value="UniProtKB-KW"/>
</dbReference>
<dbReference type="GO" id="GO:2001295">
    <property type="term" value="P:malonyl-CoA biosynthetic process"/>
    <property type="evidence" value="ECO:0007669"/>
    <property type="project" value="UniProtKB-UniRule"/>
</dbReference>
<dbReference type="Gene3D" id="3.90.226.10">
    <property type="entry name" value="2-enoyl-CoA Hydratase, Chain A, domain 1"/>
    <property type="match status" value="1"/>
</dbReference>
<dbReference type="HAMAP" id="MF_01395">
    <property type="entry name" value="AcetylCoA_CT_beta"/>
    <property type="match status" value="1"/>
</dbReference>
<dbReference type="InterPro" id="IPR034733">
    <property type="entry name" value="AcCoA_carboxyl_beta"/>
</dbReference>
<dbReference type="InterPro" id="IPR000438">
    <property type="entry name" value="Acetyl_CoA_COase_Trfase_b_su"/>
</dbReference>
<dbReference type="InterPro" id="IPR029045">
    <property type="entry name" value="ClpP/crotonase-like_dom_sf"/>
</dbReference>
<dbReference type="InterPro" id="IPR011762">
    <property type="entry name" value="COA_CT_N"/>
</dbReference>
<dbReference type="NCBIfam" id="TIGR00515">
    <property type="entry name" value="accD"/>
    <property type="match status" value="1"/>
</dbReference>
<dbReference type="PANTHER" id="PTHR42995">
    <property type="entry name" value="ACETYL-COENZYME A CARBOXYLASE CARBOXYL TRANSFERASE SUBUNIT BETA, CHLOROPLASTIC"/>
    <property type="match status" value="1"/>
</dbReference>
<dbReference type="PANTHER" id="PTHR42995:SF5">
    <property type="entry name" value="ACETYL-COENZYME A CARBOXYLASE CARBOXYL TRANSFERASE SUBUNIT BETA, CHLOROPLASTIC"/>
    <property type="match status" value="1"/>
</dbReference>
<dbReference type="Pfam" id="PF01039">
    <property type="entry name" value="Carboxyl_trans"/>
    <property type="match status" value="1"/>
</dbReference>
<dbReference type="PRINTS" id="PR01070">
    <property type="entry name" value="ACCCTRFRASEB"/>
</dbReference>
<dbReference type="SUPFAM" id="SSF52096">
    <property type="entry name" value="ClpP/crotonase"/>
    <property type="match status" value="1"/>
</dbReference>
<dbReference type="PROSITE" id="PS50980">
    <property type="entry name" value="COA_CT_NTER"/>
    <property type="match status" value="1"/>
</dbReference>
<accession>Q830B4</accession>
<name>ACCD_ENTFA</name>
<proteinExistence type="inferred from homology"/>
<evidence type="ECO:0000255" key="1">
    <source>
        <dbReference type="HAMAP-Rule" id="MF_01395"/>
    </source>
</evidence>
<evidence type="ECO:0000255" key="2">
    <source>
        <dbReference type="PROSITE-ProRule" id="PRU01136"/>
    </source>
</evidence>